<sequence length="399" mass="43404">MTAAAPSKPLPRTPRVRQAYPLDYPLLLCALGLLAFGWVMVTSASMSIAEACCQNPFHYSIRHAIALGLALMLGLMAYSVPSHWWERHGVWLFLASALVLILVLIPGIGRTVNGATRWIPLGPLNVQPSEFVKLFAILYVAGYLVRHADKVVNQLSGFIRPLILIGAAALLILMQPDFGTTAVMLATVMGMLFLGGASLLPFIVLLAIVGAGLVTLVIFSPYRLERVVSFLNPWEDPFNSGYQLSQALIAFGRGEWFGVGLGNGIQKQYFLPEAHTDFLPSVIGEELGLAGMLVLIAAFVFLSWRAMSIGVRAEALKRPFESYVAQGIGLWIGLQSFVNLGVNVGILPTKGLTLPFMSYGSNSLMVGCMAVAILLRIDVMLRRVESEAKFKRGTPWSRA</sequence>
<dbReference type="EC" id="2.4.99.28" evidence="2"/>
<dbReference type="EMBL" id="CP001896">
    <property type="protein sequence ID" value="ADC61101.1"/>
    <property type="molecule type" value="Genomic_DNA"/>
</dbReference>
<dbReference type="RefSeq" id="WP_012969377.1">
    <property type="nucleotide sequence ID" value="NC_013851.1"/>
</dbReference>
<dbReference type="SMR" id="D3RVH4"/>
<dbReference type="STRING" id="572477.Alvin_0132"/>
<dbReference type="KEGG" id="alv:Alvin_0132"/>
<dbReference type="eggNOG" id="COG0772">
    <property type="taxonomic scope" value="Bacteria"/>
</dbReference>
<dbReference type="HOGENOM" id="CLU_029243_1_1_6"/>
<dbReference type="OrthoDB" id="9768187at2"/>
<dbReference type="UniPathway" id="UPA00219"/>
<dbReference type="Proteomes" id="UP000001441">
    <property type="component" value="Chromosome"/>
</dbReference>
<dbReference type="GO" id="GO:0032153">
    <property type="term" value="C:cell division site"/>
    <property type="evidence" value="ECO:0007669"/>
    <property type="project" value="UniProtKB-UniRule"/>
</dbReference>
<dbReference type="GO" id="GO:0005886">
    <property type="term" value="C:plasma membrane"/>
    <property type="evidence" value="ECO:0007669"/>
    <property type="project" value="UniProtKB-SubCell"/>
</dbReference>
<dbReference type="GO" id="GO:0015648">
    <property type="term" value="F:lipid-linked peptidoglycan transporter activity"/>
    <property type="evidence" value="ECO:0007669"/>
    <property type="project" value="TreeGrafter"/>
</dbReference>
<dbReference type="GO" id="GO:0008955">
    <property type="term" value="F:peptidoglycan glycosyltransferase activity"/>
    <property type="evidence" value="ECO:0007669"/>
    <property type="project" value="UniProtKB-UniRule"/>
</dbReference>
<dbReference type="GO" id="GO:0071555">
    <property type="term" value="P:cell wall organization"/>
    <property type="evidence" value="ECO:0007669"/>
    <property type="project" value="UniProtKB-KW"/>
</dbReference>
<dbReference type="GO" id="GO:0043093">
    <property type="term" value="P:FtsZ-dependent cytokinesis"/>
    <property type="evidence" value="ECO:0007669"/>
    <property type="project" value="UniProtKB-UniRule"/>
</dbReference>
<dbReference type="GO" id="GO:0009252">
    <property type="term" value="P:peptidoglycan biosynthetic process"/>
    <property type="evidence" value="ECO:0007669"/>
    <property type="project" value="UniProtKB-UniRule"/>
</dbReference>
<dbReference type="GO" id="GO:0008360">
    <property type="term" value="P:regulation of cell shape"/>
    <property type="evidence" value="ECO:0007669"/>
    <property type="project" value="UniProtKB-KW"/>
</dbReference>
<dbReference type="HAMAP" id="MF_00913">
    <property type="entry name" value="PGT_FtsW_proteobact"/>
    <property type="match status" value="1"/>
</dbReference>
<dbReference type="InterPro" id="IPR013437">
    <property type="entry name" value="FtsW"/>
</dbReference>
<dbReference type="InterPro" id="IPR001182">
    <property type="entry name" value="FtsW/RodA"/>
</dbReference>
<dbReference type="NCBIfam" id="TIGR02614">
    <property type="entry name" value="ftsW"/>
    <property type="match status" value="1"/>
</dbReference>
<dbReference type="PANTHER" id="PTHR30474">
    <property type="entry name" value="CELL CYCLE PROTEIN"/>
    <property type="match status" value="1"/>
</dbReference>
<dbReference type="PANTHER" id="PTHR30474:SF2">
    <property type="entry name" value="PEPTIDOGLYCAN GLYCOSYLTRANSFERASE FTSW-RELATED"/>
    <property type="match status" value="1"/>
</dbReference>
<dbReference type="Pfam" id="PF01098">
    <property type="entry name" value="FTSW_RODA_SPOVE"/>
    <property type="match status" value="1"/>
</dbReference>
<keyword id="KW-0131">Cell cycle</keyword>
<keyword id="KW-0132">Cell division</keyword>
<keyword id="KW-0997">Cell inner membrane</keyword>
<keyword id="KW-1003">Cell membrane</keyword>
<keyword id="KW-0133">Cell shape</keyword>
<keyword id="KW-0961">Cell wall biogenesis/degradation</keyword>
<keyword id="KW-0328">Glycosyltransferase</keyword>
<keyword id="KW-0472">Membrane</keyword>
<keyword id="KW-0573">Peptidoglycan synthesis</keyword>
<keyword id="KW-1185">Reference proteome</keyword>
<keyword id="KW-0808">Transferase</keyword>
<keyword id="KW-0812">Transmembrane</keyword>
<keyword id="KW-1133">Transmembrane helix</keyword>
<gene>
    <name evidence="2" type="primary">ftsW</name>
    <name type="ordered locus">Alvin_0132</name>
</gene>
<proteinExistence type="inferred from homology"/>
<protein>
    <recommendedName>
        <fullName evidence="2">Probable peptidoglycan glycosyltransferase FtsW</fullName>
        <shortName evidence="2">PGT</shortName>
        <ecNumber evidence="2">2.4.99.28</ecNumber>
    </recommendedName>
    <alternativeName>
        <fullName evidence="2">Cell division protein FtsW</fullName>
    </alternativeName>
    <alternativeName>
        <fullName evidence="2">Cell wall polymerase</fullName>
    </alternativeName>
    <alternativeName>
        <fullName evidence="2">Peptidoglycan polymerase</fullName>
        <shortName evidence="2">PG polymerase</shortName>
    </alternativeName>
</protein>
<reference key="1">
    <citation type="journal article" date="2011" name="Stand. Genomic Sci.">
        <title>Complete genome sequence of Allochromatium vinosum DSM 180(T).</title>
        <authorList>
            <person name="Weissgerber T."/>
            <person name="Zigann R."/>
            <person name="Bruce D."/>
            <person name="Chang Y.J."/>
            <person name="Detter J.C."/>
            <person name="Han C."/>
            <person name="Hauser L."/>
            <person name="Jeffries C.D."/>
            <person name="Land M."/>
            <person name="Munk A.C."/>
            <person name="Tapia R."/>
            <person name="Dahl C."/>
        </authorList>
    </citation>
    <scope>NUCLEOTIDE SEQUENCE [LARGE SCALE GENOMIC DNA]</scope>
    <source>
        <strain>ATCC 17899 / DSM 180 / NBRC 103801 / NCIMB 10441 / D</strain>
    </source>
</reference>
<accession>D3RVH4</accession>
<name>FTSW_ALLVD</name>
<feature type="chain" id="PRO_0000415173" description="Probable peptidoglycan glycosyltransferase FtsW">
    <location>
        <begin position="1"/>
        <end position="399"/>
    </location>
</feature>
<feature type="topological domain" description="Cytoplasmic" evidence="1">
    <location>
        <begin position="1"/>
        <end position="25"/>
    </location>
</feature>
<feature type="transmembrane region" description="Helical" evidence="2">
    <location>
        <begin position="26"/>
        <end position="46"/>
    </location>
</feature>
<feature type="topological domain" description="Periplasmic" evidence="1">
    <location>
        <begin position="47"/>
        <end position="64"/>
    </location>
</feature>
<feature type="transmembrane region" description="Helical" evidence="2">
    <location>
        <begin position="65"/>
        <end position="85"/>
    </location>
</feature>
<feature type="topological domain" description="Cytoplasmic" evidence="1">
    <location>
        <begin position="86"/>
        <end position="88"/>
    </location>
</feature>
<feature type="transmembrane region" description="Helical" evidence="2">
    <location>
        <begin position="89"/>
        <end position="109"/>
    </location>
</feature>
<feature type="topological domain" description="Periplasmic" evidence="1">
    <location>
        <begin position="110"/>
        <end position="117"/>
    </location>
</feature>
<feature type="transmembrane region" description="Helical" evidence="2">
    <location>
        <begin position="118"/>
        <end position="138"/>
    </location>
</feature>
<feature type="topological domain" description="Cytoplasmic" evidence="1">
    <location>
        <begin position="139"/>
        <end position="153"/>
    </location>
</feature>
<feature type="transmembrane region" description="Helical" evidence="2">
    <location>
        <begin position="154"/>
        <end position="174"/>
    </location>
</feature>
<feature type="topological domain" description="Periplasmic" evidence="1">
    <location>
        <begin position="175"/>
        <end position="177"/>
    </location>
</feature>
<feature type="transmembrane region" description="Helical" evidence="2">
    <location>
        <begin position="178"/>
        <end position="198"/>
    </location>
</feature>
<feature type="transmembrane region" description="Helical" evidence="2">
    <location>
        <begin position="199"/>
        <end position="219"/>
    </location>
</feature>
<feature type="topological domain" description="Periplasmic" evidence="1">
    <location>
        <begin position="220"/>
        <end position="281"/>
    </location>
</feature>
<feature type="transmembrane region" description="Helical" evidence="2">
    <location>
        <begin position="282"/>
        <end position="302"/>
    </location>
</feature>
<feature type="topological domain" description="Cytoplasmic" evidence="1">
    <location>
        <begin position="303"/>
        <end position="326"/>
    </location>
</feature>
<feature type="transmembrane region" description="Helical" evidence="2">
    <location>
        <begin position="327"/>
        <end position="347"/>
    </location>
</feature>
<feature type="topological domain" description="Periplasmic" evidence="1">
    <location>
        <begin position="348"/>
        <end position="353"/>
    </location>
</feature>
<feature type="transmembrane region" description="Helical" evidence="2">
    <location>
        <begin position="354"/>
        <end position="374"/>
    </location>
</feature>
<feature type="topological domain" description="Cytoplasmic" evidence="1">
    <location>
        <begin position="375"/>
        <end position="399"/>
    </location>
</feature>
<comment type="function">
    <text evidence="2">Peptidoglycan polymerase that is essential for cell division.</text>
</comment>
<comment type="catalytic activity">
    <reaction evidence="2">
        <text>[GlcNAc-(1-&gt;4)-Mur2Ac(oyl-L-Ala-gamma-D-Glu-L-Lys-D-Ala-D-Ala)](n)-di-trans,octa-cis-undecaprenyl diphosphate + beta-D-GlcNAc-(1-&gt;4)-Mur2Ac(oyl-L-Ala-gamma-D-Glu-L-Lys-D-Ala-D-Ala)-di-trans,octa-cis-undecaprenyl diphosphate = [GlcNAc-(1-&gt;4)-Mur2Ac(oyl-L-Ala-gamma-D-Glu-L-Lys-D-Ala-D-Ala)](n+1)-di-trans,octa-cis-undecaprenyl diphosphate + di-trans,octa-cis-undecaprenyl diphosphate + H(+)</text>
        <dbReference type="Rhea" id="RHEA:23708"/>
        <dbReference type="Rhea" id="RHEA-COMP:9602"/>
        <dbReference type="Rhea" id="RHEA-COMP:9603"/>
        <dbReference type="ChEBI" id="CHEBI:15378"/>
        <dbReference type="ChEBI" id="CHEBI:58405"/>
        <dbReference type="ChEBI" id="CHEBI:60033"/>
        <dbReference type="ChEBI" id="CHEBI:78435"/>
        <dbReference type="EC" id="2.4.99.28"/>
    </reaction>
</comment>
<comment type="pathway">
    <text evidence="2">Cell wall biogenesis; peptidoglycan biosynthesis.</text>
</comment>
<comment type="subcellular location">
    <subcellularLocation>
        <location evidence="2">Cell inner membrane</location>
        <topology evidence="2">Multi-pass membrane protein</topology>
    </subcellularLocation>
    <text evidence="2">Localizes to the division septum.</text>
</comment>
<comment type="similarity">
    <text evidence="2">Belongs to the SEDS family. FtsW subfamily.</text>
</comment>
<organism>
    <name type="scientific">Allochromatium vinosum (strain ATCC 17899 / DSM 180 / NBRC 103801 / NCIMB 10441 / D)</name>
    <name type="common">Chromatium vinosum</name>
    <dbReference type="NCBI Taxonomy" id="572477"/>
    <lineage>
        <taxon>Bacteria</taxon>
        <taxon>Pseudomonadati</taxon>
        <taxon>Pseudomonadota</taxon>
        <taxon>Gammaproteobacteria</taxon>
        <taxon>Chromatiales</taxon>
        <taxon>Chromatiaceae</taxon>
        <taxon>Allochromatium</taxon>
    </lineage>
</organism>
<evidence type="ECO:0000255" key="1"/>
<evidence type="ECO:0000255" key="2">
    <source>
        <dbReference type="HAMAP-Rule" id="MF_00913"/>
    </source>
</evidence>